<sequence>MAEQQKGLTYADAGVDIDAGNALVERIKPAARRTARPGTVSGLGGFGALFDLKAAGYRDPVLVAATDGVGTKLRIAIDTGEVDTIGIDLVAMCVNDLVCQGAEPLFFLDYFATGKLELDQAARIIEGIAEGCAASGCALIGGETAEMPGMYHKGDFDLAGFAVGAMERGADLPRGVAAGDVLLGLASNGVHSNGYSFVRKVVELSGLAWDAPSPFGGDSLGRALLAPTRLYVTQALAAVRAGGVHALAHITGGGLTENLPRVLPEGLGARIDLGAWDLPPVFRWLAETAAMAEPELLKTFNCGIGMIVVVAADRADAIAALLEAEGETVTRIGEVIPGQGVSYDGRLL</sequence>
<comment type="catalytic activity">
    <reaction evidence="1">
        <text>2-formamido-N(1)-(5-O-phospho-beta-D-ribosyl)acetamidine + ATP = 5-amino-1-(5-phospho-beta-D-ribosyl)imidazole + ADP + phosphate + H(+)</text>
        <dbReference type="Rhea" id="RHEA:23032"/>
        <dbReference type="ChEBI" id="CHEBI:15378"/>
        <dbReference type="ChEBI" id="CHEBI:30616"/>
        <dbReference type="ChEBI" id="CHEBI:43474"/>
        <dbReference type="ChEBI" id="CHEBI:137981"/>
        <dbReference type="ChEBI" id="CHEBI:147287"/>
        <dbReference type="ChEBI" id="CHEBI:456216"/>
        <dbReference type="EC" id="6.3.3.1"/>
    </reaction>
</comment>
<comment type="pathway">
    <text evidence="1">Purine metabolism; IMP biosynthesis via de novo pathway; 5-amino-1-(5-phospho-D-ribosyl)imidazole from N(2)-formyl-N(1)-(5-phospho-D-ribosyl)glycinamide: step 2/2.</text>
</comment>
<comment type="subcellular location">
    <subcellularLocation>
        <location evidence="1">Cytoplasm</location>
    </subcellularLocation>
</comment>
<comment type="similarity">
    <text evidence="1">Belongs to the AIR synthase family.</text>
</comment>
<feature type="chain" id="PRO_1000046464" description="Phosphoribosylformylglycinamidine cyclo-ligase">
    <location>
        <begin position="1"/>
        <end position="348"/>
    </location>
</feature>
<gene>
    <name evidence="1" type="primary">purM</name>
    <name type="ordered locus">Rsph17025_3066</name>
</gene>
<name>PUR5_CERS5</name>
<dbReference type="EC" id="6.3.3.1" evidence="1"/>
<dbReference type="EMBL" id="CP000661">
    <property type="protein sequence ID" value="ABP71950.1"/>
    <property type="molecule type" value="Genomic_DNA"/>
</dbReference>
<dbReference type="SMR" id="A4WX36"/>
<dbReference type="STRING" id="349102.Rsph17025_3066"/>
<dbReference type="KEGG" id="rsq:Rsph17025_3066"/>
<dbReference type="eggNOG" id="COG0150">
    <property type="taxonomic scope" value="Bacteria"/>
</dbReference>
<dbReference type="HOGENOM" id="CLU_047116_0_0_5"/>
<dbReference type="BioCyc" id="RSPH349102:G1G8M-3169-MONOMER"/>
<dbReference type="UniPathway" id="UPA00074">
    <property type="reaction ID" value="UER00129"/>
</dbReference>
<dbReference type="GO" id="GO:0005829">
    <property type="term" value="C:cytosol"/>
    <property type="evidence" value="ECO:0007669"/>
    <property type="project" value="TreeGrafter"/>
</dbReference>
<dbReference type="GO" id="GO:0005524">
    <property type="term" value="F:ATP binding"/>
    <property type="evidence" value="ECO:0007669"/>
    <property type="project" value="UniProtKB-KW"/>
</dbReference>
<dbReference type="GO" id="GO:0004637">
    <property type="term" value="F:phosphoribosylamine-glycine ligase activity"/>
    <property type="evidence" value="ECO:0007669"/>
    <property type="project" value="TreeGrafter"/>
</dbReference>
<dbReference type="GO" id="GO:0004641">
    <property type="term" value="F:phosphoribosylformylglycinamidine cyclo-ligase activity"/>
    <property type="evidence" value="ECO:0007669"/>
    <property type="project" value="UniProtKB-UniRule"/>
</dbReference>
<dbReference type="GO" id="GO:0006189">
    <property type="term" value="P:'de novo' IMP biosynthetic process"/>
    <property type="evidence" value="ECO:0007669"/>
    <property type="project" value="UniProtKB-UniRule"/>
</dbReference>
<dbReference type="GO" id="GO:0046084">
    <property type="term" value="P:adenine biosynthetic process"/>
    <property type="evidence" value="ECO:0007669"/>
    <property type="project" value="TreeGrafter"/>
</dbReference>
<dbReference type="CDD" id="cd02196">
    <property type="entry name" value="PurM"/>
    <property type="match status" value="1"/>
</dbReference>
<dbReference type="FunFam" id="3.30.1330.10:FF:000001">
    <property type="entry name" value="Phosphoribosylformylglycinamidine cyclo-ligase"/>
    <property type="match status" value="1"/>
</dbReference>
<dbReference type="FunFam" id="3.90.650.10:FF:000011">
    <property type="entry name" value="Phosphoribosylformylglycinamidine cyclo-ligase"/>
    <property type="match status" value="1"/>
</dbReference>
<dbReference type="Gene3D" id="3.90.650.10">
    <property type="entry name" value="PurM-like C-terminal domain"/>
    <property type="match status" value="1"/>
</dbReference>
<dbReference type="Gene3D" id="3.30.1330.10">
    <property type="entry name" value="PurM-like, N-terminal domain"/>
    <property type="match status" value="1"/>
</dbReference>
<dbReference type="HAMAP" id="MF_00741">
    <property type="entry name" value="AIRS"/>
    <property type="match status" value="1"/>
</dbReference>
<dbReference type="InterPro" id="IPR010918">
    <property type="entry name" value="PurM-like_C_dom"/>
</dbReference>
<dbReference type="InterPro" id="IPR036676">
    <property type="entry name" value="PurM-like_C_sf"/>
</dbReference>
<dbReference type="InterPro" id="IPR016188">
    <property type="entry name" value="PurM-like_N"/>
</dbReference>
<dbReference type="InterPro" id="IPR036921">
    <property type="entry name" value="PurM-like_N_sf"/>
</dbReference>
<dbReference type="InterPro" id="IPR004733">
    <property type="entry name" value="PurM_cligase"/>
</dbReference>
<dbReference type="NCBIfam" id="TIGR00878">
    <property type="entry name" value="purM"/>
    <property type="match status" value="1"/>
</dbReference>
<dbReference type="PANTHER" id="PTHR10520:SF12">
    <property type="entry name" value="TRIFUNCTIONAL PURINE BIOSYNTHETIC PROTEIN ADENOSINE-3"/>
    <property type="match status" value="1"/>
</dbReference>
<dbReference type="PANTHER" id="PTHR10520">
    <property type="entry name" value="TRIFUNCTIONAL PURINE BIOSYNTHETIC PROTEIN ADENOSINE-3-RELATED"/>
    <property type="match status" value="1"/>
</dbReference>
<dbReference type="Pfam" id="PF00586">
    <property type="entry name" value="AIRS"/>
    <property type="match status" value="1"/>
</dbReference>
<dbReference type="Pfam" id="PF02769">
    <property type="entry name" value="AIRS_C"/>
    <property type="match status" value="1"/>
</dbReference>
<dbReference type="SUPFAM" id="SSF56042">
    <property type="entry name" value="PurM C-terminal domain-like"/>
    <property type="match status" value="1"/>
</dbReference>
<dbReference type="SUPFAM" id="SSF55326">
    <property type="entry name" value="PurM N-terminal domain-like"/>
    <property type="match status" value="1"/>
</dbReference>
<organism>
    <name type="scientific">Cereibacter sphaeroides (strain ATCC 17025 / ATH 2.4.3)</name>
    <name type="common">Rhodobacter sphaeroides</name>
    <dbReference type="NCBI Taxonomy" id="349102"/>
    <lineage>
        <taxon>Bacteria</taxon>
        <taxon>Pseudomonadati</taxon>
        <taxon>Pseudomonadota</taxon>
        <taxon>Alphaproteobacteria</taxon>
        <taxon>Rhodobacterales</taxon>
        <taxon>Paracoccaceae</taxon>
        <taxon>Cereibacter</taxon>
    </lineage>
</organism>
<reference key="1">
    <citation type="submission" date="2007-04" db="EMBL/GenBank/DDBJ databases">
        <title>Complete sequence of chromosome of Rhodobacter sphaeroides ATCC 17025.</title>
        <authorList>
            <consortium name="US DOE Joint Genome Institute"/>
            <person name="Copeland A."/>
            <person name="Lucas S."/>
            <person name="Lapidus A."/>
            <person name="Barry K."/>
            <person name="Detter J.C."/>
            <person name="Glavina del Rio T."/>
            <person name="Hammon N."/>
            <person name="Israni S."/>
            <person name="Dalin E."/>
            <person name="Tice H."/>
            <person name="Pitluck S."/>
            <person name="Chertkov O."/>
            <person name="Brettin T."/>
            <person name="Bruce D."/>
            <person name="Han C."/>
            <person name="Schmutz J."/>
            <person name="Larimer F."/>
            <person name="Land M."/>
            <person name="Hauser L."/>
            <person name="Kyrpides N."/>
            <person name="Kim E."/>
            <person name="Richardson P."/>
            <person name="Mackenzie C."/>
            <person name="Choudhary M."/>
            <person name="Donohue T.J."/>
            <person name="Kaplan S."/>
        </authorList>
    </citation>
    <scope>NUCLEOTIDE SEQUENCE [LARGE SCALE GENOMIC DNA]</scope>
    <source>
        <strain>ATCC 17025 / ATH 2.4.3</strain>
    </source>
</reference>
<keyword id="KW-0067">ATP-binding</keyword>
<keyword id="KW-0963">Cytoplasm</keyword>
<keyword id="KW-0436">Ligase</keyword>
<keyword id="KW-0547">Nucleotide-binding</keyword>
<keyword id="KW-0658">Purine biosynthesis</keyword>
<accession>A4WX36</accession>
<proteinExistence type="inferred from homology"/>
<protein>
    <recommendedName>
        <fullName evidence="1">Phosphoribosylformylglycinamidine cyclo-ligase</fullName>
        <ecNumber evidence="1">6.3.3.1</ecNumber>
    </recommendedName>
    <alternativeName>
        <fullName evidence="1">AIR synthase</fullName>
    </alternativeName>
    <alternativeName>
        <fullName evidence="1">AIRS</fullName>
    </alternativeName>
    <alternativeName>
        <fullName evidence="1">Phosphoribosyl-aminoimidazole synthetase</fullName>
    </alternativeName>
</protein>
<evidence type="ECO:0000255" key="1">
    <source>
        <dbReference type="HAMAP-Rule" id="MF_00741"/>
    </source>
</evidence>